<reference key="1">
    <citation type="journal article" date="2009" name="Genome Res.">
        <title>Comparative genomic analyses of the human fungal pathogens Coccidioides and their relatives.</title>
        <authorList>
            <person name="Sharpton T.J."/>
            <person name="Stajich J.E."/>
            <person name="Rounsley S.D."/>
            <person name="Gardner M.J."/>
            <person name="Wortman J.R."/>
            <person name="Jordar V.S."/>
            <person name="Maiti R."/>
            <person name="Kodira C.D."/>
            <person name="Neafsey D.E."/>
            <person name="Zeng Q."/>
            <person name="Hung C.-Y."/>
            <person name="McMahan C."/>
            <person name="Muszewska A."/>
            <person name="Grynberg M."/>
            <person name="Mandel M.A."/>
            <person name="Kellner E.M."/>
            <person name="Barker B.M."/>
            <person name="Galgiani J.N."/>
            <person name="Orbach M.J."/>
            <person name="Kirkland T.N."/>
            <person name="Cole G.T."/>
            <person name="Henn M.R."/>
            <person name="Birren B.W."/>
            <person name="Taylor J.W."/>
        </authorList>
    </citation>
    <scope>NUCLEOTIDE SEQUENCE [LARGE SCALE GENOMIC DNA]</scope>
    <source>
        <strain>C735</strain>
    </source>
</reference>
<name>RRP36_COCP7</name>
<gene>
    <name type="primary">RRP36</name>
    <name type="ORF">CPC735_036720</name>
</gene>
<feature type="chain" id="PRO_0000397629" description="rRNA biogenesis protein RRP36">
    <location>
        <begin position="1"/>
        <end position="333"/>
    </location>
</feature>
<feature type="region of interest" description="Disordered" evidence="3">
    <location>
        <begin position="1"/>
        <end position="70"/>
    </location>
</feature>
<feature type="region of interest" description="Disordered" evidence="3">
    <location>
        <begin position="84"/>
        <end position="189"/>
    </location>
</feature>
<feature type="region of interest" description="Disordered" evidence="3">
    <location>
        <begin position="303"/>
        <end position="333"/>
    </location>
</feature>
<feature type="coiled-coil region" evidence="2">
    <location>
        <begin position="218"/>
        <end position="259"/>
    </location>
</feature>
<feature type="compositionally biased region" description="Acidic residues" evidence="3">
    <location>
        <begin position="32"/>
        <end position="43"/>
    </location>
</feature>
<feature type="compositionally biased region" description="Low complexity" evidence="3">
    <location>
        <begin position="84"/>
        <end position="95"/>
    </location>
</feature>
<feature type="compositionally biased region" description="Basic and acidic residues" evidence="3">
    <location>
        <begin position="102"/>
        <end position="129"/>
    </location>
</feature>
<feature type="compositionally biased region" description="Basic and acidic residues" evidence="3">
    <location>
        <begin position="319"/>
        <end position="333"/>
    </location>
</feature>
<organism>
    <name type="scientific">Coccidioides posadasii (strain C735)</name>
    <name type="common">Valley fever fungus</name>
    <dbReference type="NCBI Taxonomy" id="222929"/>
    <lineage>
        <taxon>Eukaryota</taxon>
        <taxon>Fungi</taxon>
        <taxon>Dikarya</taxon>
        <taxon>Ascomycota</taxon>
        <taxon>Pezizomycotina</taxon>
        <taxon>Eurotiomycetes</taxon>
        <taxon>Eurotiomycetidae</taxon>
        <taxon>Onygenales</taxon>
        <taxon>Onygenaceae</taxon>
        <taxon>Coccidioides</taxon>
    </lineage>
</organism>
<keyword id="KW-0175">Coiled coil</keyword>
<keyword id="KW-0539">Nucleus</keyword>
<keyword id="KW-0687">Ribonucleoprotein</keyword>
<keyword id="KW-0690">Ribosome biogenesis</keyword>
<keyword id="KW-0698">rRNA processing</keyword>
<protein>
    <recommendedName>
        <fullName>rRNA biogenesis protein RRP36</fullName>
    </recommendedName>
    <alternativeName>
        <fullName>Ribosomal RNA-processing protein 36</fullName>
    </alternativeName>
</protein>
<proteinExistence type="inferred from homology"/>
<dbReference type="EMBL" id="ACFW01000012">
    <property type="protein sequence ID" value="EER28966.1"/>
    <property type="molecule type" value="Genomic_DNA"/>
</dbReference>
<dbReference type="RefSeq" id="XP_003071111.1">
    <property type="nucleotide sequence ID" value="XM_003071065.1"/>
</dbReference>
<dbReference type="SMR" id="C5P263"/>
<dbReference type="GeneID" id="9696606"/>
<dbReference type="KEGG" id="cpw:9696606"/>
<dbReference type="VEuPathDB" id="FungiDB:CPC735_036720"/>
<dbReference type="HOGENOM" id="CLU_048802_0_0_1"/>
<dbReference type="OrthoDB" id="448446at2759"/>
<dbReference type="Proteomes" id="UP000009084">
    <property type="component" value="Unassembled WGS sequence"/>
</dbReference>
<dbReference type="GO" id="GO:0030686">
    <property type="term" value="C:90S preribosome"/>
    <property type="evidence" value="ECO:0007669"/>
    <property type="project" value="TreeGrafter"/>
</dbReference>
<dbReference type="GO" id="GO:0005730">
    <property type="term" value="C:nucleolus"/>
    <property type="evidence" value="ECO:0007669"/>
    <property type="project" value="UniProtKB-SubCell"/>
</dbReference>
<dbReference type="GO" id="GO:0000462">
    <property type="term" value="P:maturation of SSU-rRNA from tricistronic rRNA transcript (SSU-rRNA, 5.8S rRNA, LSU-rRNA)"/>
    <property type="evidence" value="ECO:0007669"/>
    <property type="project" value="TreeGrafter"/>
</dbReference>
<dbReference type="InterPro" id="IPR009292">
    <property type="entry name" value="RRP36"/>
</dbReference>
<dbReference type="PANTHER" id="PTHR21738">
    <property type="entry name" value="RIBOSOMAL RNA PROCESSING PROTEIN 36 HOMOLOG"/>
    <property type="match status" value="1"/>
</dbReference>
<dbReference type="PANTHER" id="PTHR21738:SF0">
    <property type="entry name" value="RIBOSOMAL RNA PROCESSING PROTEIN 36 HOMOLOG"/>
    <property type="match status" value="1"/>
</dbReference>
<dbReference type="Pfam" id="PF06102">
    <property type="entry name" value="RRP36"/>
    <property type="match status" value="1"/>
</dbReference>
<evidence type="ECO:0000250" key="1"/>
<evidence type="ECO:0000255" key="2"/>
<evidence type="ECO:0000256" key="3">
    <source>
        <dbReference type="SAM" id="MobiDB-lite"/>
    </source>
</evidence>
<evidence type="ECO:0000305" key="4"/>
<sequence>MALLDSLNRRIKARVDDDDPEEYSDLSSSEQDGSDADSDELEGSEAASDGGSDDEELSDSSAPEDTAIDASLNQISFGALAKAQASLGLSSSSSNNRRKRKLSTDKEQGPSPLDDIRARIRATREEKSKSTASTTTSKDKKDLPHRSSKHAPTVQSSKHAVSRKRTVVDATAISGPKARDPRFDSVVLSHGTSNPQALGNAQAAAAKNYSFLNDYRDAELSSLKQQLAKAKNPAEKEQLKRTIRSMTDKIRTFERKQREKEVVARHRRRERDLIREGKKSTPYFLKKGDVKKEVLKQRYEEMGAKDRQKSIVRRRKKVAARERREMPDMRRTG</sequence>
<accession>C5P263</accession>
<comment type="function">
    <text evidence="1">Component of the 90S pre-ribosome involved in the maturation of rRNAs. Required for early cleavages of the pre-RNAs in the 40S ribosomal subunit maturation pathway (By similarity).</text>
</comment>
<comment type="subunit">
    <text evidence="1">Associates with 90S and pre-40S pre-ribosomal particles.</text>
</comment>
<comment type="subcellular location">
    <subcellularLocation>
        <location evidence="1">Nucleus</location>
        <location evidence="1">Nucleolus</location>
    </subcellularLocation>
</comment>
<comment type="similarity">
    <text evidence="4">Belongs to the RRP36 family.</text>
</comment>